<protein>
    <recommendedName>
        <fullName evidence="2">Small ribosomal subunit protein uS8</fullName>
    </recommendedName>
    <alternativeName>
        <fullName>40S ribosomal protein S22</fullName>
    </alternativeName>
</protein>
<reference key="1">
    <citation type="journal article" date="2004" name="Science">
        <title>The Ashbya gossypii genome as a tool for mapping the ancient Saccharomyces cerevisiae genome.</title>
        <authorList>
            <person name="Dietrich F.S."/>
            <person name="Voegeli S."/>
            <person name="Brachat S."/>
            <person name="Lerch A."/>
            <person name="Gates K."/>
            <person name="Steiner S."/>
            <person name="Mohr C."/>
            <person name="Poehlmann R."/>
            <person name="Luedi P."/>
            <person name="Choi S."/>
            <person name="Wing R.A."/>
            <person name="Flavier A."/>
            <person name="Gaffney T.D."/>
            <person name="Philippsen P."/>
        </authorList>
    </citation>
    <scope>NUCLEOTIDE SEQUENCE [LARGE SCALE GENOMIC DNA]</scope>
    <source>
        <strain>ATCC 10895 / CBS 109.51 / FGSC 9923 / NRRL Y-1056</strain>
    </source>
</reference>
<reference key="2">
    <citation type="journal article" date="2013" name="G3 (Bethesda)">
        <title>Genomes of Ashbya fungi isolated from insects reveal four mating-type loci, numerous translocations, lack of transposons, and distinct gene duplications.</title>
        <authorList>
            <person name="Dietrich F.S."/>
            <person name="Voegeli S."/>
            <person name="Kuo S."/>
            <person name="Philippsen P."/>
        </authorList>
    </citation>
    <scope>GENOME REANNOTATION</scope>
    <source>
        <strain>ATCC 10895 / CBS 109.51 / FGSC 9923 / NRRL Y-1056</strain>
    </source>
</reference>
<feature type="initiator methionine" description="Removed" evidence="1">
    <location>
        <position position="1"/>
    </location>
</feature>
<feature type="chain" id="PRO_0000126616" description="Small ribosomal subunit protein uS8">
    <location>
        <begin position="2"/>
        <end position="130"/>
    </location>
</feature>
<keyword id="KW-1185">Reference proteome</keyword>
<keyword id="KW-0687">Ribonucleoprotein</keyword>
<keyword id="KW-0689">Ribosomal protein</keyword>
<evidence type="ECO:0000250" key="1"/>
<evidence type="ECO:0000305" key="2"/>
<proteinExistence type="inferred from homology"/>
<accession>Q752J5</accession>
<comment type="miscellaneous">
    <text>There are two genes for S22 in A.gossypii.</text>
</comment>
<comment type="similarity">
    <text evidence="2">Belongs to the universal ribosomal protein uS8 family.</text>
</comment>
<name>RS22_EREGS</name>
<organism>
    <name type="scientific">Eremothecium gossypii (strain ATCC 10895 / CBS 109.51 / FGSC 9923 / NRRL Y-1056)</name>
    <name type="common">Yeast</name>
    <name type="synonym">Ashbya gossypii</name>
    <dbReference type="NCBI Taxonomy" id="284811"/>
    <lineage>
        <taxon>Eukaryota</taxon>
        <taxon>Fungi</taxon>
        <taxon>Dikarya</taxon>
        <taxon>Ascomycota</taxon>
        <taxon>Saccharomycotina</taxon>
        <taxon>Saccharomycetes</taxon>
        <taxon>Saccharomycetales</taxon>
        <taxon>Saccharomycetaceae</taxon>
        <taxon>Eremothecium</taxon>
    </lineage>
</organism>
<sequence>MTRTSVLADALNAINNAEKTGKRQVLIRPSSKVIIKFLQVMQKHGYIGEFEYIDDHRSGKIVVQLTGRLNKCGVISPRFNVKINDVEKWTANLLPARQFGYVILTTSAGIMDHEEAHRKHVAGKILGFVY</sequence>
<dbReference type="EMBL" id="AE016818">
    <property type="protein sequence ID" value="AAS52534.1"/>
    <property type="molecule type" value="Genomic_DNA"/>
</dbReference>
<dbReference type="EMBL" id="AE016819">
    <property type="protein sequence ID" value="AAS53950.1"/>
    <property type="molecule type" value="Genomic_DNA"/>
</dbReference>
<dbReference type="RefSeq" id="NP_984710.1">
    <property type="nucleotide sequence ID" value="NM_210063.1"/>
</dbReference>
<dbReference type="RefSeq" id="NP_986126.1">
    <property type="nucleotide sequence ID" value="NM_212262.1"/>
</dbReference>
<dbReference type="SMR" id="Q752J5"/>
<dbReference type="FunCoup" id="Q752J5">
    <property type="interactions" value="1199"/>
</dbReference>
<dbReference type="STRING" id="284811.Q752J5"/>
<dbReference type="EnsemblFungi" id="AAS52534">
    <property type="protein sequence ID" value="AAS52534"/>
    <property type="gene ID" value="AGOS_AEL151C"/>
</dbReference>
<dbReference type="EnsemblFungi" id="AAS53950">
    <property type="protein sequence ID" value="AAS53950"/>
    <property type="gene ID" value="AGOS_AFR579W"/>
</dbReference>
<dbReference type="GeneID" id="4620896"/>
<dbReference type="GeneID" id="4622408"/>
<dbReference type="KEGG" id="ago:AGOS_AEL151C"/>
<dbReference type="KEGG" id="ago:AGOS_AFR579W"/>
<dbReference type="eggNOG" id="KOG1754">
    <property type="taxonomic scope" value="Eukaryota"/>
</dbReference>
<dbReference type="HOGENOM" id="CLU_098428_1_1_1"/>
<dbReference type="InParanoid" id="Q752J5"/>
<dbReference type="OMA" id="LPAKNFG"/>
<dbReference type="OrthoDB" id="10250260at2759"/>
<dbReference type="Proteomes" id="UP000000591">
    <property type="component" value="Chromosome V"/>
</dbReference>
<dbReference type="Proteomes" id="UP000000591">
    <property type="component" value="Chromosome VI"/>
</dbReference>
<dbReference type="GO" id="GO:0022627">
    <property type="term" value="C:cytosolic small ribosomal subunit"/>
    <property type="evidence" value="ECO:0000318"/>
    <property type="project" value="GO_Central"/>
</dbReference>
<dbReference type="GO" id="GO:0003735">
    <property type="term" value="F:structural constituent of ribosome"/>
    <property type="evidence" value="ECO:0000318"/>
    <property type="project" value="GO_Central"/>
</dbReference>
<dbReference type="GO" id="GO:0006412">
    <property type="term" value="P:translation"/>
    <property type="evidence" value="ECO:0007669"/>
    <property type="project" value="InterPro"/>
</dbReference>
<dbReference type="FunFam" id="3.30.1370.30:FF:000001">
    <property type="entry name" value="40S ribosomal protein S15a"/>
    <property type="match status" value="1"/>
</dbReference>
<dbReference type="FunFam" id="3.30.1490.10:FF:000002">
    <property type="entry name" value="40S ribosomal protein S15a"/>
    <property type="match status" value="1"/>
</dbReference>
<dbReference type="Gene3D" id="3.30.1370.30">
    <property type="match status" value="1"/>
</dbReference>
<dbReference type="Gene3D" id="3.30.1490.10">
    <property type="match status" value="1"/>
</dbReference>
<dbReference type="HAMAP" id="MF_01302_A">
    <property type="entry name" value="Ribosomal_uS8_A"/>
    <property type="match status" value="1"/>
</dbReference>
<dbReference type="InterPro" id="IPR000630">
    <property type="entry name" value="Ribosomal_uS8"/>
</dbReference>
<dbReference type="InterPro" id="IPR047863">
    <property type="entry name" value="Ribosomal_uS8_CS"/>
</dbReference>
<dbReference type="InterPro" id="IPR035987">
    <property type="entry name" value="Ribosomal_uS8_sf"/>
</dbReference>
<dbReference type="NCBIfam" id="NF003115">
    <property type="entry name" value="PRK04034.1"/>
    <property type="match status" value="1"/>
</dbReference>
<dbReference type="PANTHER" id="PTHR11758">
    <property type="entry name" value="40S RIBOSOMAL PROTEIN S15A"/>
    <property type="match status" value="1"/>
</dbReference>
<dbReference type="Pfam" id="PF00410">
    <property type="entry name" value="Ribosomal_S8"/>
    <property type="match status" value="1"/>
</dbReference>
<dbReference type="SUPFAM" id="SSF56047">
    <property type="entry name" value="Ribosomal protein S8"/>
    <property type="match status" value="1"/>
</dbReference>
<dbReference type="PROSITE" id="PS00053">
    <property type="entry name" value="RIBOSOMAL_S8"/>
    <property type="match status" value="1"/>
</dbReference>
<gene>
    <name type="primary">RPS22A</name>
    <name type="ordered locus">AEL151C</name>
</gene>
<gene>
    <name type="primary">RPS22B</name>
    <name type="ordered locus">AFR579W</name>
</gene>